<evidence type="ECO:0000250" key="1"/>
<evidence type="ECO:0000250" key="2">
    <source>
        <dbReference type="UniProtKB" id="Q12441"/>
    </source>
</evidence>
<evidence type="ECO:0000256" key="3">
    <source>
        <dbReference type="SAM" id="MobiDB-lite"/>
    </source>
</evidence>
<evidence type="ECO:0000269" key="4">
    <source>
    </source>
</evidence>
<evidence type="ECO:0000305" key="5"/>
<dbReference type="EMBL" id="U19027">
    <property type="status" value="NOT_ANNOTATED_CDS"/>
    <property type="molecule type" value="Genomic_DNA"/>
</dbReference>
<dbReference type="EMBL" id="AY723845">
    <property type="protein sequence ID" value="AAU09762.1"/>
    <property type="molecule type" value="Genomic_DNA"/>
</dbReference>
<dbReference type="EMBL" id="BK006945">
    <property type="protein sequence ID" value="DAA09545.1"/>
    <property type="molecule type" value="Genomic_DNA"/>
</dbReference>
<dbReference type="PIR" id="S57044">
    <property type="entry name" value="S57044"/>
</dbReference>
<dbReference type="RefSeq" id="NP_012561.3">
    <molecule id="P0CX75-1"/>
    <property type="nucleotide sequence ID" value="NM_001181684.3"/>
</dbReference>
<dbReference type="RefSeq" id="NP_013673.1">
    <molecule id="P0CX75-1"/>
    <property type="nucleotide sequence ID" value="NM_001182398.1"/>
</dbReference>
<dbReference type="RefSeq" id="NP_058172.1">
    <molecule id="P0CX75-1"/>
    <property type="nucleotide sequence ID" value="NM_001184407.1"/>
</dbReference>
<dbReference type="SMR" id="P0CX75"/>
<dbReference type="BioGRID" id="31496">
    <property type="interactions" value="4"/>
</dbReference>
<dbReference type="BioGRID" id="33779">
    <property type="interactions" value="8"/>
</dbReference>
<dbReference type="BioGRID" id="35130">
    <property type="interactions" value="5"/>
</dbReference>
<dbReference type="FunCoup" id="P0CX75">
    <property type="interactions" value="71"/>
</dbReference>
<dbReference type="GlyGen" id="P0CX75">
    <property type="glycosylation" value="2 sites"/>
</dbReference>
<dbReference type="GeneID" id="850926"/>
<dbReference type="KEGG" id="sce:YJR026W"/>
<dbReference type="KEGG" id="sce:YLR227W-A"/>
<dbReference type="KEGG" id="sce:YML040W"/>
<dbReference type="AGR" id="SGD:S000007375"/>
<dbReference type="SGD" id="S000007375">
    <property type="gene designation" value="YLR227W-A"/>
</dbReference>
<dbReference type="VEuPathDB" id="FungiDB:YJR026W"/>
<dbReference type="VEuPathDB" id="FungiDB:YLR227W-A"/>
<dbReference type="VEuPathDB" id="FungiDB:YML040W"/>
<dbReference type="HOGENOM" id="CLU_045291_1_0_1"/>
<dbReference type="InParanoid" id="P0CX75"/>
<dbReference type="OrthoDB" id="5423336at2759"/>
<dbReference type="Proteomes" id="UP000002311">
    <property type="component" value="Chromosome XII"/>
</dbReference>
<dbReference type="RNAct" id="P0CX75">
    <property type="molecule type" value="protein"/>
</dbReference>
<dbReference type="GO" id="GO:0005737">
    <property type="term" value="C:cytoplasm"/>
    <property type="evidence" value="ECO:0007669"/>
    <property type="project" value="UniProtKB-SubCell"/>
</dbReference>
<dbReference type="GO" id="GO:0003723">
    <property type="term" value="F:RNA binding"/>
    <property type="evidence" value="ECO:0007669"/>
    <property type="project" value="UniProtKB-KW"/>
</dbReference>
<dbReference type="GO" id="GO:0075523">
    <property type="term" value="P:viral translational frameshifting"/>
    <property type="evidence" value="ECO:0007669"/>
    <property type="project" value="UniProtKB-KW"/>
</dbReference>
<dbReference type="InterPro" id="IPR015820">
    <property type="entry name" value="TYA"/>
</dbReference>
<dbReference type="Pfam" id="PF01021">
    <property type="entry name" value="TYA"/>
    <property type="match status" value="1"/>
</dbReference>
<name>YL13A_YEAST</name>
<protein>
    <recommendedName>
        <fullName>Transposon Ty1-LR3 Gag polyprotein</fullName>
    </recommendedName>
    <alternativeName>
        <fullName>Gag-p49</fullName>
    </alternativeName>
    <alternativeName>
        <fullName>Transposon Ty1 protein A</fullName>
        <shortName>TY1A</shortName>
        <shortName>TYA</shortName>
    </alternativeName>
    <alternativeName>
        <fullName>p58</fullName>
    </alternativeName>
    <component>
        <recommendedName>
            <fullName>Capsid protein</fullName>
            <shortName>CA</shortName>
        </recommendedName>
        <alternativeName>
            <fullName>Gag-p45</fullName>
        </alternativeName>
        <alternativeName>
            <fullName>p54</fullName>
        </alternativeName>
    </component>
    <component>
        <recommendedName>
            <fullName>Gag-p4</fullName>
        </recommendedName>
    </component>
</protein>
<reference key="1">
    <citation type="journal article" date="1997" name="Nature">
        <title>The nucleotide sequence of Saccharomyces cerevisiae chromosome XII.</title>
        <authorList>
            <person name="Johnston M."/>
            <person name="Hillier L.W."/>
            <person name="Riles L."/>
            <person name="Albermann K."/>
            <person name="Andre B."/>
            <person name="Ansorge W."/>
            <person name="Benes V."/>
            <person name="Brueckner M."/>
            <person name="Delius H."/>
            <person name="Dubois E."/>
            <person name="Duesterhoeft A."/>
            <person name="Entian K.-D."/>
            <person name="Floeth M."/>
            <person name="Goffeau A."/>
            <person name="Hebling U."/>
            <person name="Heumann K."/>
            <person name="Heuss-Neitzel D."/>
            <person name="Hilbert H."/>
            <person name="Hilger F."/>
            <person name="Kleine K."/>
            <person name="Koetter P."/>
            <person name="Louis E.J."/>
            <person name="Messenguy F."/>
            <person name="Mewes H.-W."/>
            <person name="Miosga T."/>
            <person name="Moestl D."/>
            <person name="Mueller-Auer S."/>
            <person name="Nentwich U."/>
            <person name="Obermaier B."/>
            <person name="Piravandi E."/>
            <person name="Pohl T.M."/>
            <person name="Portetelle D."/>
            <person name="Purnelle B."/>
            <person name="Rechmann S."/>
            <person name="Rieger M."/>
            <person name="Rinke M."/>
            <person name="Rose M."/>
            <person name="Scharfe M."/>
            <person name="Scherens B."/>
            <person name="Scholler P."/>
            <person name="Schwager C."/>
            <person name="Schwarz S."/>
            <person name="Underwood A.P."/>
            <person name="Urrestarazu L.A."/>
            <person name="Vandenbol M."/>
            <person name="Verhasselt P."/>
            <person name="Vierendeels F."/>
            <person name="Voet M."/>
            <person name="Volckaert G."/>
            <person name="Voss H."/>
            <person name="Wambutt R."/>
            <person name="Wedler E."/>
            <person name="Wedler H."/>
            <person name="Zimmermann F.K."/>
            <person name="Zollner A."/>
            <person name="Hani J."/>
            <person name="Hoheisel J.D."/>
        </authorList>
    </citation>
    <scope>NUCLEOTIDE SEQUENCE [LARGE SCALE GENOMIC DNA]</scope>
    <source>
        <strain>ATCC 204508 / S288c</strain>
    </source>
</reference>
<reference key="2">
    <citation type="journal article" date="2014" name="G3 (Bethesda)">
        <title>The reference genome sequence of Saccharomyces cerevisiae: Then and now.</title>
        <authorList>
            <person name="Engel S.R."/>
            <person name="Dietrich F.S."/>
            <person name="Fisk D.G."/>
            <person name="Binkley G."/>
            <person name="Balakrishnan R."/>
            <person name="Costanzo M.C."/>
            <person name="Dwight S.S."/>
            <person name="Hitz B.C."/>
            <person name="Karra K."/>
            <person name="Nash R.S."/>
            <person name="Weng S."/>
            <person name="Wong E.D."/>
            <person name="Lloyd P."/>
            <person name="Skrzypek M.S."/>
            <person name="Miyasato S.R."/>
            <person name="Simison M."/>
            <person name="Cherry J.M."/>
        </authorList>
    </citation>
    <scope>GENOME REANNOTATION</scope>
    <source>
        <strain>ATCC 204508 / S288c</strain>
    </source>
</reference>
<reference key="3">
    <citation type="journal article" date="2007" name="Genome Res.">
        <title>Approaching a complete repository of sequence-verified protein-encoding clones for Saccharomyces cerevisiae.</title>
        <authorList>
            <person name="Hu Y."/>
            <person name="Rolfs A."/>
            <person name="Bhullar B."/>
            <person name="Murthy T.V.S."/>
            <person name="Zhu C."/>
            <person name="Berger M.F."/>
            <person name="Camargo A.A."/>
            <person name="Kelley F."/>
            <person name="McCarron S."/>
            <person name="Jepson D."/>
            <person name="Richardson A."/>
            <person name="Raphael J."/>
            <person name="Moreira D."/>
            <person name="Taycher E."/>
            <person name="Zuo D."/>
            <person name="Mohr S."/>
            <person name="Kane M.F."/>
            <person name="Williamson J."/>
            <person name="Simpson A.J.G."/>
            <person name="Bulyk M.L."/>
            <person name="Harlow E."/>
            <person name="Marsischky G."/>
            <person name="Kolodner R.D."/>
            <person name="LaBaer J."/>
        </authorList>
    </citation>
    <scope>NUCLEOTIDE SEQUENCE [GENOMIC DNA]</scope>
    <source>
        <strain>ATCC 204508 / S288c</strain>
    </source>
</reference>
<reference key="4">
    <citation type="journal article" date="1998" name="Genome Res.">
        <title>Transposable elements and genome organization: a comprehensive survey of retrotransposons revealed by the complete Saccharomyces cerevisiae genome sequence.</title>
        <authorList>
            <person name="Kim J.M."/>
            <person name="Vanguri S."/>
            <person name="Boeke J.D."/>
            <person name="Gabriel A."/>
            <person name="Voytas D.F."/>
        </authorList>
    </citation>
    <scope>NOMENCLATURE</scope>
</reference>
<reference key="5">
    <citation type="journal article" date="2002" name="Mol. Cell. Biol.">
        <title>Differential effects of chromatin and Gcn4 on the 50-fold range of expression among individual yeast Ty1 retrotransposons.</title>
        <authorList>
            <person name="Morillon A."/>
            <person name="Benard L."/>
            <person name="Springer M."/>
            <person name="Lesage P."/>
        </authorList>
    </citation>
    <scope>INDUCTION</scope>
</reference>
<reference key="6">
    <citation type="journal article" date="2005" name="Cytogenet. Genome Res.">
        <title>Happy together: the life and times of Ty retrotransposons and their hosts.</title>
        <authorList>
            <person name="Lesage P."/>
            <person name="Todeschini A.L."/>
        </authorList>
    </citation>
    <scope>REVIEW</scope>
</reference>
<feature type="chain" id="PRO_0000409800" description="Transposon Ty1-LR3 Gag polyprotein">
    <location>
        <begin position="1"/>
        <end position="440"/>
    </location>
</feature>
<feature type="chain" id="PRO_0000409801" description="Capsid protein" evidence="1">
    <location>
        <begin position="1"/>
        <end position="401"/>
    </location>
</feature>
<feature type="peptide" id="PRO_0000409802" description="Gag-p4" evidence="1">
    <location>
        <begin position="402"/>
        <end position="440"/>
    </location>
</feature>
<feature type="region of interest" description="Disordered" evidence="3">
    <location>
        <begin position="1"/>
        <end position="93"/>
    </location>
</feature>
<feature type="region of interest" description="Disordered" evidence="3">
    <location>
        <begin position="126"/>
        <end position="173"/>
    </location>
</feature>
<feature type="region of interest" description="RNA-binding" evidence="1">
    <location>
        <begin position="299"/>
        <end position="401"/>
    </location>
</feature>
<feature type="region of interest" description="Disordered" evidence="3">
    <location>
        <begin position="352"/>
        <end position="440"/>
    </location>
</feature>
<feature type="compositionally biased region" description="Low complexity" evidence="3">
    <location>
        <begin position="1"/>
        <end position="16"/>
    </location>
</feature>
<feature type="compositionally biased region" description="Polar residues" evidence="3">
    <location>
        <begin position="48"/>
        <end position="60"/>
    </location>
</feature>
<feature type="compositionally biased region" description="Polar residues" evidence="3">
    <location>
        <begin position="127"/>
        <end position="152"/>
    </location>
</feature>
<feature type="compositionally biased region" description="Low complexity" evidence="3">
    <location>
        <begin position="153"/>
        <end position="165"/>
    </location>
</feature>
<feature type="compositionally biased region" description="Low complexity" evidence="3">
    <location>
        <begin position="402"/>
        <end position="418"/>
    </location>
</feature>
<feature type="compositionally biased region" description="Polar residues" evidence="3">
    <location>
        <begin position="419"/>
        <end position="428"/>
    </location>
</feature>
<feature type="compositionally biased region" description="Basic and acidic residues" evidence="3">
    <location>
        <begin position="429"/>
        <end position="440"/>
    </location>
</feature>
<feature type="site" description="Cleavage; by Ty1 protease" evidence="1">
    <location>
        <begin position="401"/>
        <end position="402"/>
    </location>
</feature>
<feature type="modified residue" description="Phosphoserine" evidence="2">
    <location>
        <position position="416"/>
    </location>
</feature>
<feature type="sequence conflict" description="In Ref. 3; AAU09762." evidence="5" ref="3">
    <original>S</original>
    <variation>G</variation>
    <location>
        <position position="255"/>
    </location>
</feature>
<organism>
    <name type="scientific">Saccharomyces cerevisiae (strain ATCC 204508 / S288c)</name>
    <name type="common">Baker's yeast</name>
    <dbReference type="NCBI Taxonomy" id="559292"/>
    <lineage>
        <taxon>Eukaryota</taxon>
        <taxon>Fungi</taxon>
        <taxon>Dikarya</taxon>
        <taxon>Ascomycota</taxon>
        <taxon>Saccharomycotina</taxon>
        <taxon>Saccharomycetes</taxon>
        <taxon>Saccharomycetales</taxon>
        <taxon>Saccharomycetaceae</taxon>
        <taxon>Saccharomyces</taxon>
    </lineage>
</organism>
<sequence length="440" mass="48993">MESQQLSQHSHISHGSACASVTSKEVHTNQDPLDVSASKTEECEKASTKANSQQTTTPASSAVPENPHHASPQPASVPPPQNGPYPQQCMMTQNQANPSGWSFYGHPSMIPYTPYQMSPMYFPPGPQSQFPQYPSSVGTPLSTPSPESGNTFTDSSSADSDMTSTKKYVRPPPMLTSPNDFPNWVKTYIKFLQNSNLGGIIPTVNGKPVRQITDDELTFLYNTFQIFAPSQFLPTWVKDILSVDYTDIMKILSKSIEKMQSDTQEANDIVTLANLQYNGSTPADAFETKVTNIIDRLNNNGIHINNKVACQLIMRGLSGEYKFLRYTRHRHLNMTVAELFLDIHAIYEEQQGSRNSKPNYRRNLSDEKNDSRSYTNTTKPKVIARNPQKTNNSKSKTARAHNVSTSNNSPSTDNDSISKSTTEPIQLNNKHDLHLRPGTY</sequence>
<proteinExistence type="evidence at transcript level"/>
<comment type="function">
    <text evidence="1">Capsid protein (CA) is the structural component of the virus-like particle (VLP), forming the shell that encapsulates the retrotransposons dimeric RNA genome. The particles are assembled from trimer-clustered units and there are holes in the capsid shells that allow for the diffusion of macromolecules. CA also has nucleocapsid-like chaperone activity, promoting primer tRNA(i)-Met annealing to the multipartite primer-binding site (PBS), dimerization of Ty1 RNA and initiation of reverse transcription (By similarity).</text>
</comment>
<comment type="subunit">
    <text evidence="1">Homotrimer.</text>
</comment>
<comment type="subcellular location">
    <subcellularLocation>
        <location evidence="1">Cytoplasm</location>
    </subcellularLocation>
</comment>
<comment type="alternative products">
    <event type="ribosomal frameshifting"/>
    <isoform>
        <id>P0CX75-1</id>
        <name>Transposon Ty1-LR3 Gag polyprotein</name>
        <sequence type="displayed"/>
    </isoform>
    <isoform>
        <id>P0C2I6-1</id>
        <name>Transposon Ty1-LR3 Gag-Pol polyprotein</name>
        <sequence type="external"/>
    </isoform>
    <text evidence="1">The Gag-Pol polyprotein is generated by a +1 ribosomal frameshift. The ratio of Gag:Gag-Pol varies between 20:1 and 5:1 (By similarity).</text>
</comment>
<comment type="induction">
    <text evidence="4">Ty1-LR3 is a highly expressed element. Induced under amino acid starvation conditions by GCN4.</text>
</comment>
<comment type="domain">
    <text evidence="1">The C-terminal RNA-binding region of CA is sufficient for all its nucleocapsid-like chaperone activities.</text>
</comment>
<comment type="miscellaneous">
    <text>Retrotransposons are mobile genetic entities that are able to replicate via an RNA intermediate and a reverse transcription step. In contrast to retroviruses, retrotransposons are non-infectious, lack an envelope and remain intracellular. Ty1 retrotransposons belong to the copia elements (pseudoviridae).</text>
</comment>
<comment type="miscellaneous">
    <molecule>Isoform Transposon Ty1-LR3 Gag polyprotein</molecule>
    <text>Produced by conventional translation.</text>
</comment>
<gene>
    <name type="primary">TY1A-LR3</name>
    <name type="synonym">YLRWTy1-3 GAG</name>
    <name type="ordered locus">YLR227W-A</name>
    <name type="ORF">L8083.11</name>
</gene>
<accession>P0CX75</accession>
<accession>D6VWK0</accession>
<accession>P47097</accession>
<accession>Q66R50</accession>
<keyword id="KW-0963">Cytoplasm</keyword>
<keyword id="KW-0597">Phosphoprotein</keyword>
<keyword id="KW-1185">Reference proteome</keyword>
<keyword id="KW-0688">Ribosomal frameshifting</keyword>
<keyword id="KW-0694">RNA-binding</keyword>
<keyword id="KW-0814">Transposable element</keyword>